<gene>
    <name evidence="2" type="primary">aosR</name>
    <name type="ordered locus">Rv1332</name>
    <name type="ORF">MTCY130.17</name>
</gene>
<organism>
    <name type="scientific">Mycobacterium tuberculosis (strain ATCC 25618 / H37Rv)</name>
    <dbReference type="NCBI Taxonomy" id="83332"/>
    <lineage>
        <taxon>Bacteria</taxon>
        <taxon>Bacillati</taxon>
        <taxon>Actinomycetota</taxon>
        <taxon>Actinomycetes</taxon>
        <taxon>Mycobacteriales</taxon>
        <taxon>Mycobacteriaceae</taxon>
        <taxon>Mycobacterium</taxon>
        <taxon>Mycobacterium tuberculosis complex</taxon>
    </lineage>
</organism>
<feature type="chain" id="PRO_0000103805" description="Oxidative stress regulator AosR">
    <location>
        <begin position="1"/>
        <end position="218"/>
    </location>
</feature>
<feature type="short sequence motif" description="CXXXC" evidence="4">
    <location>
        <begin position="5"/>
        <end position="9"/>
    </location>
</feature>
<feature type="disulfide bond" description="Redox-active" evidence="1">
    <location>
        <begin position="5"/>
        <end position="9"/>
    </location>
</feature>
<feature type="mutagenesis site" description="Forms dimers independent of the oxidizing nature of the environment, but cannot interact with SigH and cannot rescue the growth defects of the deletion mutant; when associated with A-9." evidence="1">
    <original>C</original>
    <variation>A</variation>
    <location>
        <position position="5"/>
    </location>
</feature>
<feature type="mutagenesis site" description="Forms dimers independent of the oxidizing nature of the environment, but cannot interact with SigH and cannot rescue the growth defects of the deletion mutant; when associated with A-5." evidence="1">
    <original>C</original>
    <variation>A</variation>
    <location>
        <position position="9"/>
    </location>
</feature>
<keyword id="KW-0010">Activator</keyword>
<keyword id="KW-1015">Disulfide bond</keyword>
<keyword id="KW-0676">Redox-active center</keyword>
<keyword id="KW-1185">Reference proteome</keyword>
<keyword id="KW-0346">Stress response</keyword>
<keyword id="KW-0804">Transcription</keyword>
<keyword id="KW-0805">Transcription regulation</keyword>
<accession>P9WM25</accession>
<accession>L0T7Y8</accession>
<accession>P64809</accession>
<accession>Q10643</accession>
<protein>
    <recommendedName>
        <fullName evidence="3">Oxidative stress regulator AosR</fullName>
    </recommendedName>
    <alternativeName>
        <fullName evidence="2">Actinomycetes oxidative stress regulator</fullName>
    </alternativeName>
</protein>
<evidence type="ECO:0000269" key="1">
    <source>
    </source>
</evidence>
<evidence type="ECO:0000303" key="2">
    <source>
    </source>
</evidence>
<evidence type="ECO:0000305" key="3"/>
<evidence type="ECO:0000305" key="4">
    <source>
    </source>
</evidence>
<comment type="function">
    <text evidence="1">Transcription factor crucial for intra-mycobacterial redox homeostasis and protection against host-derived oxidative and nitrosative radicals (PubMed:34018220). In response to oxidative stress, interacts with the ECF sigma factor SigH and, in conjunction with SigH, binds to an auxiliary promoter upstream of mec-cysO-cysM, leading to the transcriptional activation of these genes encoding a non-canonical actinomycete-specific cysteine biosynthesis pathway (PubMed:34018220). Increased transcription of mec-cysO-cysM results in enhanced production of L-cysteine and cysteine-derived antioxidant molecules (PubMed:34018220). Increased production of cysteine protects mycobacteria cells from host phagocyte-derived oxidative and nitrosative stress, thus facilitating the mycobacterial growth in the host (PubMed:34018220).</text>
</comment>
<comment type="activity regulation">
    <text evidence="1">Activity is modulated by the formation of a disulfide bound within the N-terminal Cys-X-X-X-Cys (CXXXC) motif (PubMed:34018220). This intramolecular disulfide bond is formed in response to oxidative stress, and results in oxidative stress-dependent interaction with the sigma factor SigH (PubMed:34018220).</text>
</comment>
<comment type="subunit">
    <text evidence="1">Homodimer (PubMed:34018220). Under oxidative stress, interacts with the extracytoplasmic-function (ECF) RNA polymerase sigma factor SigH (PubMed:34018220).</text>
</comment>
<comment type="disruption phenotype">
    <text evidence="1">Deletion mutant shows no growth difference in vitro in nutrient rich or limiting media, but its survival is compromised within peritoneal macrophages at day 4 post-infection (PubMed:34018220). Mutant shows a marginal decrease in the survival upon exposure to nitrosative stress and markedly compromised survival upon exposure to peroxide radicals (PubMed:34018220). Failure of the mutant to upregulate cysteine biosynthesis during oxidative stress generates a domino effect, causing differential expression of 6% of M.tuberculosis genes, resulting in attenuated survival (PubMed:34018220).</text>
</comment>
<comment type="similarity">
    <text evidence="3">Belongs to the AosR family.</text>
</comment>
<sequence>MPPVCGRRCSRTGEIRGYSGSIVRRWKRVETRDGPRFRSSLAPHEAALLKNLAGAMIGLLDDRDSSSPSDELEEITGIKTGHAQRPGDPTLRRLLPDFYRPDDLDDDDPTAVDGSESFNAALRSLHEPEIIDAKRVAAQQLLDTVPDNGGRLELTESDANAWIAAVNDLRLALGVMLEIGPRGPERLPGNHPLAAHFNVYQWLTVLQEYLVLVLMGSR</sequence>
<dbReference type="EMBL" id="AL123456">
    <property type="protein sequence ID" value="CCP44090.1"/>
    <property type="molecule type" value="Genomic_DNA"/>
</dbReference>
<dbReference type="PIR" id="H70770">
    <property type="entry name" value="H70770"/>
</dbReference>
<dbReference type="RefSeq" id="NP_215848.1">
    <property type="nucleotide sequence ID" value="NC_000962.3"/>
</dbReference>
<dbReference type="RefSeq" id="WP_003898829.1">
    <property type="nucleotide sequence ID" value="NC_000962.3"/>
</dbReference>
<dbReference type="STRING" id="83332.Rv1332"/>
<dbReference type="PaxDb" id="83332-Rv1332"/>
<dbReference type="DNASU" id="886901"/>
<dbReference type="GeneID" id="886901"/>
<dbReference type="KEGG" id="mtu:Rv1332"/>
<dbReference type="KEGG" id="mtv:RVBD_1332"/>
<dbReference type="PATRIC" id="fig|83332.111.peg.1487"/>
<dbReference type="TubercuList" id="Rv1332"/>
<dbReference type="eggNOG" id="ENOG5032Z6K">
    <property type="taxonomic scope" value="Bacteria"/>
</dbReference>
<dbReference type="InParanoid" id="P9WM25"/>
<dbReference type="OrthoDB" id="3268479at2"/>
<dbReference type="Proteomes" id="UP000001584">
    <property type="component" value="Chromosome"/>
</dbReference>
<dbReference type="InterPro" id="IPR018561">
    <property type="entry name" value="AosR"/>
</dbReference>
<dbReference type="Pfam" id="PF09438">
    <property type="entry name" value="DUF2017"/>
    <property type="match status" value="1"/>
</dbReference>
<name>AOSR_MYCTU</name>
<reference key="1">
    <citation type="journal article" date="1998" name="Nature">
        <title>Deciphering the biology of Mycobacterium tuberculosis from the complete genome sequence.</title>
        <authorList>
            <person name="Cole S.T."/>
            <person name="Brosch R."/>
            <person name="Parkhill J."/>
            <person name="Garnier T."/>
            <person name="Churcher C.M."/>
            <person name="Harris D.E."/>
            <person name="Gordon S.V."/>
            <person name="Eiglmeier K."/>
            <person name="Gas S."/>
            <person name="Barry C.E. III"/>
            <person name="Tekaia F."/>
            <person name="Badcock K."/>
            <person name="Basham D."/>
            <person name="Brown D."/>
            <person name="Chillingworth T."/>
            <person name="Connor R."/>
            <person name="Davies R.M."/>
            <person name="Devlin K."/>
            <person name="Feltwell T."/>
            <person name="Gentles S."/>
            <person name="Hamlin N."/>
            <person name="Holroyd S."/>
            <person name="Hornsby T."/>
            <person name="Jagels K."/>
            <person name="Krogh A."/>
            <person name="McLean J."/>
            <person name="Moule S."/>
            <person name="Murphy L.D."/>
            <person name="Oliver S."/>
            <person name="Osborne J."/>
            <person name="Quail M.A."/>
            <person name="Rajandream M.A."/>
            <person name="Rogers J."/>
            <person name="Rutter S."/>
            <person name="Seeger K."/>
            <person name="Skelton S."/>
            <person name="Squares S."/>
            <person name="Squares R."/>
            <person name="Sulston J.E."/>
            <person name="Taylor K."/>
            <person name="Whitehead S."/>
            <person name="Barrell B.G."/>
        </authorList>
    </citation>
    <scope>NUCLEOTIDE SEQUENCE [LARGE SCALE GENOMIC DNA]</scope>
    <source>
        <strain>ATCC 25618 / H37Rv</strain>
    </source>
</reference>
<reference key="2">
    <citation type="journal article" date="2011" name="Mol. Cell. Proteomics">
        <title>Proteogenomic analysis of Mycobacterium tuberculosis by high resolution mass spectrometry.</title>
        <authorList>
            <person name="Kelkar D.S."/>
            <person name="Kumar D."/>
            <person name="Kumar P."/>
            <person name="Balakrishnan L."/>
            <person name="Muthusamy B."/>
            <person name="Yadav A.K."/>
            <person name="Shrivastava P."/>
            <person name="Marimuthu A."/>
            <person name="Anand S."/>
            <person name="Sundaram H."/>
            <person name="Kingsbury R."/>
            <person name="Harsha H.C."/>
            <person name="Nair B."/>
            <person name="Prasad T.S."/>
            <person name="Chauhan D.S."/>
            <person name="Katoch K."/>
            <person name="Katoch V.M."/>
            <person name="Kumar P."/>
            <person name="Chaerkady R."/>
            <person name="Ramachandran S."/>
            <person name="Dash D."/>
            <person name="Pandey A."/>
        </authorList>
    </citation>
    <scope>IDENTIFICATION BY MASS SPECTROMETRY [LARGE SCALE ANALYSIS]</scope>
    <source>
        <strain>ATCC 25618 / H37Rv</strain>
    </source>
</reference>
<reference key="3">
    <citation type="journal article" date="2021" name="EMBO J.">
        <title>Redox homeostasis in Mycobacterium tuberculosis is modulated by a novel actinomycete-specific transcription factor.</title>
        <authorList>
            <person name="Khan M.Z."/>
            <person name="Singha B."/>
            <person name="Ali M.F."/>
            <person name="Taunk K."/>
            <person name="Rapole S."/>
            <person name="Gourinath S."/>
            <person name="Nandicoori V.K."/>
        </authorList>
    </citation>
    <scope>FUNCTION</scope>
    <scope>ACTIVITY REGULATION</scope>
    <scope>SUBUNIT</scope>
    <scope>INTERACTION WITH SIGH</scope>
    <scope>DISRUPTION PHENOTYPE</scope>
    <scope>DISULFIDE BOND</scope>
    <scope>MUTAGENESIS OF CYS-5 AND CYS-9</scope>
</reference>
<proteinExistence type="evidence at protein level"/>